<dbReference type="EC" id="3.5.4.16" evidence="2"/>
<dbReference type="EMBL" id="CP000408">
    <property type="protein sequence ID" value="ABP92318.1"/>
    <property type="molecule type" value="Genomic_DNA"/>
</dbReference>
<dbReference type="SMR" id="A4W1S9"/>
<dbReference type="KEGG" id="ssv:SSU98_1160"/>
<dbReference type="HOGENOM" id="CLU_049768_3_3_9"/>
<dbReference type="UniPathway" id="UPA00848">
    <property type="reaction ID" value="UER00151"/>
</dbReference>
<dbReference type="GO" id="GO:0005737">
    <property type="term" value="C:cytoplasm"/>
    <property type="evidence" value="ECO:0007669"/>
    <property type="project" value="TreeGrafter"/>
</dbReference>
<dbReference type="GO" id="GO:0005525">
    <property type="term" value="F:GTP binding"/>
    <property type="evidence" value="ECO:0007669"/>
    <property type="project" value="UniProtKB-KW"/>
</dbReference>
<dbReference type="GO" id="GO:0003934">
    <property type="term" value="F:GTP cyclohydrolase I activity"/>
    <property type="evidence" value="ECO:0007669"/>
    <property type="project" value="UniProtKB-UniRule"/>
</dbReference>
<dbReference type="GO" id="GO:0008270">
    <property type="term" value="F:zinc ion binding"/>
    <property type="evidence" value="ECO:0007669"/>
    <property type="project" value="UniProtKB-UniRule"/>
</dbReference>
<dbReference type="GO" id="GO:0006730">
    <property type="term" value="P:one-carbon metabolic process"/>
    <property type="evidence" value="ECO:0007669"/>
    <property type="project" value="UniProtKB-UniRule"/>
</dbReference>
<dbReference type="GO" id="GO:0006729">
    <property type="term" value="P:tetrahydrobiopterin biosynthetic process"/>
    <property type="evidence" value="ECO:0007669"/>
    <property type="project" value="TreeGrafter"/>
</dbReference>
<dbReference type="GO" id="GO:0046654">
    <property type="term" value="P:tetrahydrofolate biosynthetic process"/>
    <property type="evidence" value="ECO:0007669"/>
    <property type="project" value="UniProtKB-UniRule"/>
</dbReference>
<dbReference type="FunFam" id="1.10.286.10:FF:000001">
    <property type="entry name" value="GTP cyclohydrolase 1"/>
    <property type="match status" value="1"/>
</dbReference>
<dbReference type="FunFam" id="3.30.1130.10:FF:000001">
    <property type="entry name" value="GTP cyclohydrolase 1"/>
    <property type="match status" value="1"/>
</dbReference>
<dbReference type="Gene3D" id="1.10.286.10">
    <property type="match status" value="1"/>
</dbReference>
<dbReference type="Gene3D" id="3.30.1130.10">
    <property type="match status" value="1"/>
</dbReference>
<dbReference type="HAMAP" id="MF_00223">
    <property type="entry name" value="FolE"/>
    <property type="match status" value="1"/>
</dbReference>
<dbReference type="InterPro" id="IPR043133">
    <property type="entry name" value="GTP-CH-I_C/QueF"/>
</dbReference>
<dbReference type="InterPro" id="IPR043134">
    <property type="entry name" value="GTP-CH-I_N"/>
</dbReference>
<dbReference type="InterPro" id="IPR001474">
    <property type="entry name" value="GTP_CycHdrlase_I"/>
</dbReference>
<dbReference type="InterPro" id="IPR018234">
    <property type="entry name" value="GTP_CycHdrlase_I_CS"/>
</dbReference>
<dbReference type="InterPro" id="IPR020602">
    <property type="entry name" value="GTP_CycHdrlase_I_dom"/>
</dbReference>
<dbReference type="NCBIfam" id="TIGR00063">
    <property type="entry name" value="folE"/>
    <property type="match status" value="1"/>
</dbReference>
<dbReference type="NCBIfam" id="NF006825">
    <property type="entry name" value="PRK09347.1-2"/>
    <property type="match status" value="1"/>
</dbReference>
<dbReference type="NCBIfam" id="NF006826">
    <property type="entry name" value="PRK09347.1-3"/>
    <property type="match status" value="1"/>
</dbReference>
<dbReference type="PANTHER" id="PTHR11109:SF7">
    <property type="entry name" value="GTP CYCLOHYDROLASE 1"/>
    <property type="match status" value="1"/>
</dbReference>
<dbReference type="PANTHER" id="PTHR11109">
    <property type="entry name" value="GTP CYCLOHYDROLASE I"/>
    <property type="match status" value="1"/>
</dbReference>
<dbReference type="Pfam" id="PF01227">
    <property type="entry name" value="GTP_cyclohydroI"/>
    <property type="match status" value="1"/>
</dbReference>
<dbReference type="SUPFAM" id="SSF55620">
    <property type="entry name" value="Tetrahydrobiopterin biosynthesis enzymes-like"/>
    <property type="match status" value="1"/>
</dbReference>
<dbReference type="PROSITE" id="PS00859">
    <property type="entry name" value="GTP_CYCLOHYDROL_1_1"/>
    <property type="match status" value="1"/>
</dbReference>
<dbReference type="PROSITE" id="PS00860">
    <property type="entry name" value="GTP_CYCLOHYDROL_1_2"/>
    <property type="match status" value="1"/>
</dbReference>
<comment type="catalytic activity">
    <reaction evidence="2">
        <text>GTP + H2O = 7,8-dihydroneopterin 3'-triphosphate + formate + H(+)</text>
        <dbReference type="Rhea" id="RHEA:17473"/>
        <dbReference type="ChEBI" id="CHEBI:15377"/>
        <dbReference type="ChEBI" id="CHEBI:15378"/>
        <dbReference type="ChEBI" id="CHEBI:15740"/>
        <dbReference type="ChEBI" id="CHEBI:37565"/>
        <dbReference type="ChEBI" id="CHEBI:58462"/>
        <dbReference type="EC" id="3.5.4.16"/>
    </reaction>
</comment>
<comment type="pathway">
    <text evidence="2">Cofactor biosynthesis; 7,8-dihydroneopterin triphosphate biosynthesis; 7,8-dihydroneopterin triphosphate from GTP: step 1/1.</text>
</comment>
<comment type="subunit">
    <text evidence="1">Toroid-shaped homodecamer, composed of two pentamers of five dimers.</text>
</comment>
<comment type="similarity">
    <text evidence="2">Belongs to the GTP cyclohydrolase I family.</text>
</comment>
<protein>
    <recommendedName>
        <fullName evidence="2">GTP cyclohydrolase 1</fullName>
        <ecNumber evidence="2">3.5.4.16</ecNumber>
    </recommendedName>
    <alternativeName>
        <fullName evidence="2">GTP cyclohydrolase I</fullName>
        <shortName evidence="2">GTP-CH-I</shortName>
    </alternativeName>
</protein>
<sequence length="187" mass="21251">MSKQEQIEQTIYQLLELLGEDPNREGLLDTPKRVAKMYLEMFNGLEEDPKDQFTAVFSEGHEEVVLVKDIPFHSMCEHHLVPFYGIAHVAYIPSKGRVTGLSKLARAVEVASRRPQLQERLTHQVAHALQDALEPEGVFVMVEAEHMCMSMRGIRKPGSKTVTTVALGKYKEDAILRRELLSMIHNK</sequence>
<proteinExistence type="inferred from homology"/>
<accession>A4W1S9</accession>
<organism>
    <name type="scientific">Streptococcus suis (strain 98HAH33)</name>
    <dbReference type="NCBI Taxonomy" id="391296"/>
    <lineage>
        <taxon>Bacteria</taxon>
        <taxon>Bacillati</taxon>
        <taxon>Bacillota</taxon>
        <taxon>Bacilli</taxon>
        <taxon>Lactobacillales</taxon>
        <taxon>Streptococcaceae</taxon>
        <taxon>Streptococcus</taxon>
    </lineage>
</organism>
<keyword id="KW-0342">GTP-binding</keyword>
<keyword id="KW-0378">Hydrolase</keyword>
<keyword id="KW-0479">Metal-binding</keyword>
<keyword id="KW-0547">Nucleotide-binding</keyword>
<keyword id="KW-0554">One-carbon metabolism</keyword>
<keyword id="KW-0862">Zinc</keyword>
<name>GCH1_STRS2</name>
<reference key="1">
    <citation type="journal article" date="2007" name="PLoS ONE">
        <title>A glimpse of streptococcal toxic shock syndrome from comparative genomics of S. suis 2 Chinese isolates.</title>
        <authorList>
            <person name="Chen C."/>
            <person name="Tang J."/>
            <person name="Dong W."/>
            <person name="Wang C."/>
            <person name="Feng Y."/>
            <person name="Wang J."/>
            <person name="Zheng F."/>
            <person name="Pan X."/>
            <person name="Liu D."/>
            <person name="Li M."/>
            <person name="Song Y."/>
            <person name="Zhu X."/>
            <person name="Sun H."/>
            <person name="Feng T."/>
            <person name="Guo Z."/>
            <person name="Ju A."/>
            <person name="Ge J."/>
            <person name="Dong Y."/>
            <person name="Sun W."/>
            <person name="Jiang Y."/>
            <person name="Wang J."/>
            <person name="Yan J."/>
            <person name="Yang H."/>
            <person name="Wang X."/>
            <person name="Gao G.F."/>
            <person name="Yang R."/>
            <person name="Wang J."/>
            <person name="Yu J."/>
        </authorList>
    </citation>
    <scope>NUCLEOTIDE SEQUENCE [LARGE SCALE GENOMIC DNA]</scope>
    <source>
        <strain>98HAH33</strain>
    </source>
</reference>
<feature type="chain" id="PRO_1000043747" description="GTP cyclohydrolase 1">
    <location>
        <begin position="1"/>
        <end position="187"/>
    </location>
</feature>
<feature type="binding site" evidence="2">
    <location>
        <position position="76"/>
    </location>
    <ligand>
        <name>Zn(2+)</name>
        <dbReference type="ChEBI" id="CHEBI:29105"/>
    </ligand>
</feature>
<feature type="binding site" evidence="2">
    <location>
        <position position="79"/>
    </location>
    <ligand>
        <name>Zn(2+)</name>
        <dbReference type="ChEBI" id="CHEBI:29105"/>
    </ligand>
</feature>
<feature type="binding site" evidence="2">
    <location>
        <position position="148"/>
    </location>
    <ligand>
        <name>Zn(2+)</name>
        <dbReference type="ChEBI" id="CHEBI:29105"/>
    </ligand>
</feature>
<evidence type="ECO:0000250" key="1"/>
<evidence type="ECO:0000255" key="2">
    <source>
        <dbReference type="HAMAP-Rule" id="MF_00223"/>
    </source>
</evidence>
<gene>
    <name evidence="2" type="primary">folE</name>
    <name type="ordered locus">SSU98_1160</name>
</gene>